<sequence length="482" mass="53325">MSPQTETKASVGFKAGVKDYKLTYYTPEYQTLDTDILAAFRVTPQPGVPPEEAGAAVAAESSTGTWTTVWTDGLTSLDRYKGRCYHIDPVPGEENQYICYVAYPLDLFEEGSVTNMFTSIVGNVFGFKALRALRLEDLRIPVAYIKTFQGPPHGIQVERDKLNKYGRPLLGCTIKPKLGLSAKNYGRAVYECLRGGLDFTKDDENVNSQPFMRWRDRFLFCAEALYKAQAETGEIKGHYLNATAGTCEEMIKRAVFARELGVPIVMHDYLTGGFTANTSLAHYCRDNGLLLHIHRAMHAVIDRQKNHGMHFRVLAKALRLSGGDHIHAGTVVGKLEGERDITLGFVDLLRDDYTEIDANRGIYFTQSWVSTPGVLPVASGGIHVWHMPALTEIFGDDSVLQFGGGTLGHPWGNAPGAVANRVALEACVQARNEGRDLAREGNTIIREASKWSPELAAACEVWKEIKFEFPAVDTLDKDKKKG</sequence>
<protein>
    <recommendedName>
        <fullName evidence="1">Ribulose bisphosphate carboxylase large chain</fullName>
        <shortName evidence="1">RuBisCO large subunit</shortName>
        <ecNumber evidence="1">4.1.1.39</ecNumber>
    </recommendedName>
</protein>
<feature type="propeptide" id="PRO_0000031419" evidence="1">
    <location>
        <begin position="1"/>
        <end position="2"/>
    </location>
</feature>
<feature type="chain" id="PRO_0000031420" description="Ribulose bisphosphate carboxylase large chain">
    <location>
        <begin position="3"/>
        <end position="482"/>
    </location>
</feature>
<feature type="active site" description="Proton acceptor" evidence="1">
    <location>
        <position position="175"/>
    </location>
</feature>
<feature type="active site" description="Proton acceptor" evidence="1">
    <location>
        <position position="294"/>
    </location>
</feature>
<feature type="binding site" description="in homodimeric partner" evidence="1">
    <location>
        <position position="123"/>
    </location>
    <ligand>
        <name>substrate</name>
    </ligand>
</feature>
<feature type="binding site" evidence="1">
    <location>
        <position position="173"/>
    </location>
    <ligand>
        <name>substrate</name>
    </ligand>
</feature>
<feature type="binding site" evidence="1">
    <location>
        <position position="177"/>
    </location>
    <ligand>
        <name>substrate</name>
    </ligand>
</feature>
<feature type="binding site" description="via carbamate group" evidence="1">
    <location>
        <position position="201"/>
    </location>
    <ligand>
        <name>Mg(2+)</name>
        <dbReference type="ChEBI" id="CHEBI:18420"/>
    </ligand>
</feature>
<feature type="binding site" evidence="1">
    <location>
        <position position="203"/>
    </location>
    <ligand>
        <name>Mg(2+)</name>
        <dbReference type="ChEBI" id="CHEBI:18420"/>
    </ligand>
</feature>
<feature type="binding site" evidence="1">
    <location>
        <position position="204"/>
    </location>
    <ligand>
        <name>Mg(2+)</name>
        <dbReference type="ChEBI" id="CHEBI:18420"/>
    </ligand>
</feature>
<feature type="binding site" evidence="1">
    <location>
        <position position="295"/>
    </location>
    <ligand>
        <name>substrate</name>
    </ligand>
</feature>
<feature type="binding site" evidence="1">
    <location>
        <position position="327"/>
    </location>
    <ligand>
        <name>substrate</name>
    </ligand>
</feature>
<feature type="binding site" evidence="1">
    <location>
        <position position="379"/>
    </location>
    <ligand>
        <name>substrate</name>
    </ligand>
</feature>
<feature type="site" description="Transition state stabilizer" evidence="1">
    <location>
        <position position="334"/>
    </location>
</feature>
<feature type="modified residue" description="N-acetylproline" evidence="1">
    <location>
        <position position="3"/>
    </location>
</feature>
<feature type="modified residue" description="N6,N6,N6-trimethyllysine" evidence="1">
    <location>
        <position position="14"/>
    </location>
</feature>
<feature type="modified residue" description="N6-carboxylysine" evidence="1">
    <location>
        <position position="201"/>
    </location>
</feature>
<feature type="disulfide bond" description="Interchain; in linked form" evidence="1">
    <location>
        <position position="247"/>
    </location>
</feature>
<name>RBL_STEHA</name>
<reference key="1">
    <citation type="submission" date="1991-12" db="EMBL/GenBank/DDBJ databases">
        <title>Systematics of Caryophyllales using large subunit of ribulose-1, 5-bisphosphate carboxylase/oxygenase (rbcL) gene sequence data.</title>
        <authorList>
            <person name="Rettig J.H."/>
            <person name="Wilson H.D."/>
            <person name="Manhart J.R."/>
        </authorList>
    </citation>
    <scope>NUCLEOTIDE SEQUENCE [GENOMIC DNA]</scope>
</reference>
<comment type="function">
    <text evidence="1">RuBisCO catalyzes two reactions: the carboxylation of D-ribulose 1,5-bisphosphate, the primary event in carbon dioxide fixation, as well as the oxidative fragmentation of the pentose substrate in the photorespiration process. Both reactions occur simultaneously and in competition at the same active site.</text>
</comment>
<comment type="catalytic activity">
    <reaction evidence="1">
        <text>2 (2R)-3-phosphoglycerate + 2 H(+) = D-ribulose 1,5-bisphosphate + CO2 + H2O</text>
        <dbReference type="Rhea" id="RHEA:23124"/>
        <dbReference type="ChEBI" id="CHEBI:15377"/>
        <dbReference type="ChEBI" id="CHEBI:15378"/>
        <dbReference type="ChEBI" id="CHEBI:16526"/>
        <dbReference type="ChEBI" id="CHEBI:57870"/>
        <dbReference type="ChEBI" id="CHEBI:58272"/>
        <dbReference type="EC" id="4.1.1.39"/>
    </reaction>
</comment>
<comment type="catalytic activity">
    <reaction evidence="1">
        <text>D-ribulose 1,5-bisphosphate + O2 = 2-phosphoglycolate + (2R)-3-phosphoglycerate + 2 H(+)</text>
        <dbReference type="Rhea" id="RHEA:36631"/>
        <dbReference type="ChEBI" id="CHEBI:15378"/>
        <dbReference type="ChEBI" id="CHEBI:15379"/>
        <dbReference type="ChEBI" id="CHEBI:57870"/>
        <dbReference type="ChEBI" id="CHEBI:58033"/>
        <dbReference type="ChEBI" id="CHEBI:58272"/>
    </reaction>
</comment>
<comment type="cofactor">
    <cofactor evidence="1">
        <name>Mg(2+)</name>
        <dbReference type="ChEBI" id="CHEBI:18420"/>
    </cofactor>
    <text evidence="1">Binds 1 Mg(2+) ion per subunit.</text>
</comment>
<comment type="subunit">
    <text evidence="1">Heterohexadecamer of 8 large chains and 8 small chains; disulfide-linked. The disulfide link is formed within the large subunit homodimers.</text>
</comment>
<comment type="subcellular location">
    <subcellularLocation>
        <location>Plastid</location>
        <location>Chloroplast</location>
    </subcellularLocation>
</comment>
<comment type="PTM">
    <text evidence="1">The disulfide bond which can form in the large chain dimeric partners within the hexadecamer appears to be associated with oxidative stress and protein turnover.</text>
</comment>
<comment type="miscellaneous">
    <text evidence="1">The basic functional RuBisCO is composed of a large chain homodimer in a 'head-to-tail' conformation. In form I RuBisCO this homodimer is arranged in a barrel-like tetramer with the small subunits forming a tetrameric 'cap' on each end of the 'barrel'.</text>
</comment>
<comment type="similarity">
    <text evidence="1">Belongs to the RuBisCO large chain family. Type I subfamily.</text>
</comment>
<dbReference type="EC" id="4.1.1.39" evidence="1"/>
<dbReference type="EMBL" id="M62571">
    <property type="protein sequence ID" value="AAA84651.1"/>
    <property type="molecule type" value="Genomic_DNA"/>
</dbReference>
<dbReference type="SMR" id="P25838"/>
<dbReference type="GO" id="GO:0009507">
    <property type="term" value="C:chloroplast"/>
    <property type="evidence" value="ECO:0007669"/>
    <property type="project" value="UniProtKB-SubCell"/>
</dbReference>
<dbReference type="GO" id="GO:0000287">
    <property type="term" value="F:magnesium ion binding"/>
    <property type="evidence" value="ECO:0007669"/>
    <property type="project" value="UniProtKB-UniRule"/>
</dbReference>
<dbReference type="GO" id="GO:0004497">
    <property type="term" value="F:monooxygenase activity"/>
    <property type="evidence" value="ECO:0007669"/>
    <property type="project" value="UniProtKB-KW"/>
</dbReference>
<dbReference type="GO" id="GO:0016984">
    <property type="term" value="F:ribulose-bisphosphate carboxylase activity"/>
    <property type="evidence" value="ECO:0007669"/>
    <property type="project" value="UniProtKB-UniRule"/>
</dbReference>
<dbReference type="GO" id="GO:0009853">
    <property type="term" value="P:photorespiration"/>
    <property type="evidence" value="ECO:0007669"/>
    <property type="project" value="UniProtKB-KW"/>
</dbReference>
<dbReference type="GO" id="GO:0019253">
    <property type="term" value="P:reductive pentose-phosphate cycle"/>
    <property type="evidence" value="ECO:0007669"/>
    <property type="project" value="UniProtKB-UniRule"/>
</dbReference>
<dbReference type="CDD" id="cd08212">
    <property type="entry name" value="RuBisCO_large_I"/>
    <property type="match status" value="1"/>
</dbReference>
<dbReference type="FunFam" id="3.20.20.110:FF:000001">
    <property type="entry name" value="Ribulose bisphosphate carboxylase large chain"/>
    <property type="match status" value="1"/>
</dbReference>
<dbReference type="FunFam" id="3.30.70.150:FF:000001">
    <property type="entry name" value="Ribulose bisphosphate carboxylase large chain"/>
    <property type="match status" value="1"/>
</dbReference>
<dbReference type="Gene3D" id="3.20.20.110">
    <property type="entry name" value="Ribulose bisphosphate carboxylase, large subunit, C-terminal domain"/>
    <property type="match status" value="1"/>
</dbReference>
<dbReference type="Gene3D" id="3.30.70.150">
    <property type="entry name" value="RuBisCO large subunit, N-terminal domain"/>
    <property type="match status" value="1"/>
</dbReference>
<dbReference type="HAMAP" id="MF_01338">
    <property type="entry name" value="RuBisCO_L_type1"/>
    <property type="match status" value="1"/>
</dbReference>
<dbReference type="InterPro" id="IPR033966">
    <property type="entry name" value="RuBisCO"/>
</dbReference>
<dbReference type="InterPro" id="IPR020878">
    <property type="entry name" value="RuBisCo_large_chain_AS"/>
</dbReference>
<dbReference type="InterPro" id="IPR000685">
    <property type="entry name" value="RuBisCO_lsu_C"/>
</dbReference>
<dbReference type="InterPro" id="IPR036376">
    <property type="entry name" value="RuBisCO_lsu_C_sf"/>
</dbReference>
<dbReference type="InterPro" id="IPR017443">
    <property type="entry name" value="RuBisCO_lsu_fd_N"/>
</dbReference>
<dbReference type="InterPro" id="IPR036422">
    <property type="entry name" value="RuBisCO_lsu_N_sf"/>
</dbReference>
<dbReference type="InterPro" id="IPR020888">
    <property type="entry name" value="RuBisCO_lsuI"/>
</dbReference>
<dbReference type="NCBIfam" id="NF003252">
    <property type="entry name" value="PRK04208.1"/>
    <property type="match status" value="1"/>
</dbReference>
<dbReference type="PANTHER" id="PTHR42704">
    <property type="entry name" value="RIBULOSE BISPHOSPHATE CARBOXYLASE"/>
    <property type="match status" value="1"/>
</dbReference>
<dbReference type="PANTHER" id="PTHR42704:SF15">
    <property type="entry name" value="RIBULOSE BISPHOSPHATE CARBOXYLASE LARGE CHAIN"/>
    <property type="match status" value="1"/>
</dbReference>
<dbReference type="Pfam" id="PF00016">
    <property type="entry name" value="RuBisCO_large"/>
    <property type="match status" value="1"/>
</dbReference>
<dbReference type="Pfam" id="PF02788">
    <property type="entry name" value="RuBisCO_large_N"/>
    <property type="match status" value="1"/>
</dbReference>
<dbReference type="SFLD" id="SFLDG01052">
    <property type="entry name" value="RuBisCO"/>
    <property type="match status" value="1"/>
</dbReference>
<dbReference type="SFLD" id="SFLDS00014">
    <property type="entry name" value="RuBisCO"/>
    <property type="match status" value="1"/>
</dbReference>
<dbReference type="SFLD" id="SFLDG00301">
    <property type="entry name" value="RuBisCO-like_proteins"/>
    <property type="match status" value="1"/>
</dbReference>
<dbReference type="SUPFAM" id="SSF51649">
    <property type="entry name" value="RuBisCo, C-terminal domain"/>
    <property type="match status" value="1"/>
</dbReference>
<dbReference type="SUPFAM" id="SSF54966">
    <property type="entry name" value="RuBisCO, large subunit, small (N-terminal) domain"/>
    <property type="match status" value="1"/>
</dbReference>
<dbReference type="PROSITE" id="PS00157">
    <property type="entry name" value="RUBISCO_LARGE"/>
    <property type="match status" value="1"/>
</dbReference>
<evidence type="ECO:0000255" key="1">
    <source>
        <dbReference type="HAMAP-Rule" id="MF_01338"/>
    </source>
</evidence>
<proteinExistence type="inferred from homology"/>
<gene>
    <name evidence="1" type="primary">rbcL</name>
</gene>
<geneLocation type="chloroplast"/>
<organism>
    <name type="scientific">Stegnosperma halimifolium</name>
    <dbReference type="NCBI Taxonomy" id="3535"/>
    <lineage>
        <taxon>Eukaryota</taxon>
        <taxon>Viridiplantae</taxon>
        <taxon>Streptophyta</taxon>
        <taxon>Embryophyta</taxon>
        <taxon>Tracheophyta</taxon>
        <taxon>Spermatophyta</taxon>
        <taxon>Magnoliopsida</taxon>
        <taxon>eudicotyledons</taxon>
        <taxon>Gunneridae</taxon>
        <taxon>Pentapetalae</taxon>
        <taxon>Caryophyllales</taxon>
        <taxon>Stegnospermataceae</taxon>
        <taxon>Stegnosperma</taxon>
    </lineage>
</organism>
<accession>P25838</accession>
<keyword id="KW-0007">Acetylation</keyword>
<keyword id="KW-0113">Calvin cycle</keyword>
<keyword id="KW-0120">Carbon dioxide fixation</keyword>
<keyword id="KW-0150">Chloroplast</keyword>
<keyword id="KW-1015">Disulfide bond</keyword>
<keyword id="KW-0456">Lyase</keyword>
<keyword id="KW-0460">Magnesium</keyword>
<keyword id="KW-0479">Metal-binding</keyword>
<keyword id="KW-0488">Methylation</keyword>
<keyword id="KW-0503">Monooxygenase</keyword>
<keyword id="KW-0560">Oxidoreductase</keyword>
<keyword id="KW-0601">Photorespiration</keyword>
<keyword id="KW-0602">Photosynthesis</keyword>
<keyword id="KW-0934">Plastid</keyword>